<dbReference type="EMBL" id="AM286280">
    <property type="protein sequence ID" value="CAL09766.1"/>
    <property type="molecule type" value="Genomic_DNA"/>
</dbReference>
<dbReference type="RefSeq" id="WP_003013734.1">
    <property type="nucleotide sequence ID" value="NC_008245.1"/>
</dbReference>
<dbReference type="SMR" id="Q14FQ1"/>
<dbReference type="KEGG" id="ftf:FTF1750"/>
<dbReference type="HOGENOM" id="CLU_040469_3_2_6"/>
<dbReference type="GO" id="GO:0005829">
    <property type="term" value="C:cytosol"/>
    <property type="evidence" value="ECO:0007669"/>
    <property type="project" value="TreeGrafter"/>
</dbReference>
<dbReference type="GO" id="GO:0005524">
    <property type="term" value="F:ATP binding"/>
    <property type="evidence" value="ECO:0007669"/>
    <property type="project" value="UniProtKB-UniRule"/>
</dbReference>
<dbReference type="GO" id="GO:0016887">
    <property type="term" value="F:ATP hydrolysis activity"/>
    <property type="evidence" value="ECO:0007669"/>
    <property type="project" value="InterPro"/>
</dbReference>
<dbReference type="GO" id="GO:0140664">
    <property type="term" value="F:ATP-dependent DNA damage sensor activity"/>
    <property type="evidence" value="ECO:0007669"/>
    <property type="project" value="InterPro"/>
</dbReference>
<dbReference type="GO" id="GO:0003684">
    <property type="term" value="F:damaged DNA binding"/>
    <property type="evidence" value="ECO:0007669"/>
    <property type="project" value="UniProtKB-UniRule"/>
</dbReference>
<dbReference type="GO" id="GO:0003697">
    <property type="term" value="F:single-stranded DNA binding"/>
    <property type="evidence" value="ECO:0007669"/>
    <property type="project" value="UniProtKB-UniRule"/>
</dbReference>
<dbReference type="GO" id="GO:0006310">
    <property type="term" value="P:DNA recombination"/>
    <property type="evidence" value="ECO:0007669"/>
    <property type="project" value="UniProtKB-UniRule"/>
</dbReference>
<dbReference type="GO" id="GO:0006281">
    <property type="term" value="P:DNA repair"/>
    <property type="evidence" value="ECO:0007669"/>
    <property type="project" value="UniProtKB-UniRule"/>
</dbReference>
<dbReference type="GO" id="GO:0009432">
    <property type="term" value="P:SOS response"/>
    <property type="evidence" value="ECO:0007669"/>
    <property type="project" value="UniProtKB-UniRule"/>
</dbReference>
<dbReference type="CDD" id="cd00983">
    <property type="entry name" value="RecA"/>
    <property type="match status" value="1"/>
</dbReference>
<dbReference type="FunFam" id="3.40.50.300:FF:000087">
    <property type="entry name" value="Recombinase RecA"/>
    <property type="match status" value="1"/>
</dbReference>
<dbReference type="Gene3D" id="3.40.50.300">
    <property type="entry name" value="P-loop containing nucleotide triphosphate hydrolases"/>
    <property type="match status" value="1"/>
</dbReference>
<dbReference type="HAMAP" id="MF_00268">
    <property type="entry name" value="RecA"/>
    <property type="match status" value="1"/>
</dbReference>
<dbReference type="InterPro" id="IPR003593">
    <property type="entry name" value="AAA+_ATPase"/>
</dbReference>
<dbReference type="InterPro" id="IPR013765">
    <property type="entry name" value="DNA_recomb/repair_RecA"/>
</dbReference>
<dbReference type="InterPro" id="IPR020584">
    <property type="entry name" value="DNA_recomb/repair_RecA_CS"/>
</dbReference>
<dbReference type="InterPro" id="IPR027417">
    <property type="entry name" value="P-loop_NTPase"/>
</dbReference>
<dbReference type="InterPro" id="IPR049261">
    <property type="entry name" value="RecA-like_C"/>
</dbReference>
<dbReference type="InterPro" id="IPR049428">
    <property type="entry name" value="RecA-like_N"/>
</dbReference>
<dbReference type="InterPro" id="IPR020588">
    <property type="entry name" value="RecA_ATP-bd"/>
</dbReference>
<dbReference type="InterPro" id="IPR023400">
    <property type="entry name" value="RecA_C_sf"/>
</dbReference>
<dbReference type="InterPro" id="IPR020587">
    <property type="entry name" value="RecA_monomer-monomer_interface"/>
</dbReference>
<dbReference type="NCBIfam" id="TIGR02012">
    <property type="entry name" value="tigrfam_recA"/>
    <property type="match status" value="1"/>
</dbReference>
<dbReference type="PANTHER" id="PTHR45900:SF1">
    <property type="entry name" value="MITOCHONDRIAL DNA REPAIR PROTEIN RECA HOMOLOG-RELATED"/>
    <property type="match status" value="1"/>
</dbReference>
<dbReference type="PANTHER" id="PTHR45900">
    <property type="entry name" value="RECA"/>
    <property type="match status" value="1"/>
</dbReference>
<dbReference type="Pfam" id="PF00154">
    <property type="entry name" value="RecA"/>
    <property type="match status" value="1"/>
</dbReference>
<dbReference type="Pfam" id="PF21096">
    <property type="entry name" value="RecA_C"/>
    <property type="match status" value="1"/>
</dbReference>
<dbReference type="PRINTS" id="PR00142">
    <property type="entry name" value="RECA"/>
</dbReference>
<dbReference type="SMART" id="SM00382">
    <property type="entry name" value="AAA"/>
    <property type="match status" value="1"/>
</dbReference>
<dbReference type="SUPFAM" id="SSF52540">
    <property type="entry name" value="P-loop containing nucleoside triphosphate hydrolases"/>
    <property type="match status" value="1"/>
</dbReference>
<dbReference type="SUPFAM" id="SSF54752">
    <property type="entry name" value="RecA protein, C-terminal domain"/>
    <property type="match status" value="1"/>
</dbReference>
<dbReference type="PROSITE" id="PS00321">
    <property type="entry name" value="RECA_1"/>
    <property type="match status" value="1"/>
</dbReference>
<dbReference type="PROSITE" id="PS50162">
    <property type="entry name" value="RECA_2"/>
    <property type="match status" value="1"/>
</dbReference>
<dbReference type="PROSITE" id="PS50163">
    <property type="entry name" value="RECA_3"/>
    <property type="match status" value="1"/>
</dbReference>
<gene>
    <name evidence="1" type="primary">recA</name>
    <name type="ordered locus">FTF1750</name>
</gene>
<comment type="function">
    <text evidence="1">Can catalyze the hydrolysis of ATP in the presence of single-stranded DNA, the ATP-dependent uptake of single-stranded DNA by duplex DNA, and the ATP-dependent hybridization of homologous single-stranded DNAs. It interacts with LexA causing its activation and leading to its autocatalytic cleavage.</text>
</comment>
<comment type="subcellular location">
    <subcellularLocation>
        <location evidence="1">Cytoplasm</location>
    </subcellularLocation>
</comment>
<comment type="similarity">
    <text evidence="1">Belongs to the RecA family.</text>
</comment>
<evidence type="ECO:0000255" key="1">
    <source>
        <dbReference type="HAMAP-Rule" id="MF_00268"/>
    </source>
</evidence>
<evidence type="ECO:0000256" key="2">
    <source>
        <dbReference type="SAM" id="MobiDB-lite"/>
    </source>
</evidence>
<sequence>MSKEKALESALSQIEKQFGKGAIMRLGDQEAAHDIDVIPSGIIALDVALGIGGYPKGRIIEIYGHESSGKTTLTLLAIAQCQKQGGTAAFVDAEHALDPKYAKLLGVDVDNLIVSQPDTGEQALEIADMLVRSGGVDIVVIDSVAALTPKAEIEGDMGDSHMGLQARLMSQALRKLTANIKRSNTLVIFINQIRMKIGVMFGNPETTTGGNALKFYSSVRLEVKKGGSIKDGIDVSGNEIKVKVVKNKVAPPFKQADFELIYGEGISLEAELIDLGAKYNIIEKSGAWYSYKGKKIGQGKEKSKEYLKENTAERDEIERAILELLLPNKYSNKDSNDSPKEGSKIKTKVNPAVTQDELI</sequence>
<reference key="1">
    <citation type="journal article" date="2007" name="PLoS ONE">
        <title>Genome sequencing shows that European isolates of Francisella tularensis subspecies tularensis are almost identical to US laboratory strain Schu S4.</title>
        <authorList>
            <person name="Chaudhuri R.R."/>
            <person name="Ren C.-P."/>
            <person name="Desmond L."/>
            <person name="Vincent G.A."/>
            <person name="Silman N.J."/>
            <person name="Brehm J.K."/>
            <person name="Elmore M.J."/>
            <person name="Hudson M.J."/>
            <person name="Forsman M."/>
            <person name="Isherwood K.E."/>
            <person name="Gurycova D."/>
            <person name="Minton N.P."/>
            <person name="Titball R.W."/>
            <person name="Pallen M.J."/>
            <person name="Vipond R."/>
        </authorList>
    </citation>
    <scope>NUCLEOTIDE SEQUENCE [LARGE SCALE GENOMIC DNA]</scope>
    <source>
        <strain>FSC 198</strain>
    </source>
</reference>
<feature type="chain" id="PRO_1000047919" description="Protein RecA">
    <location>
        <begin position="1"/>
        <end position="359"/>
    </location>
</feature>
<feature type="region of interest" description="Disordered" evidence="2">
    <location>
        <begin position="329"/>
        <end position="359"/>
    </location>
</feature>
<feature type="compositionally biased region" description="Basic and acidic residues" evidence="2">
    <location>
        <begin position="331"/>
        <end position="344"/>
    </location>
</feature>
<feature type="binding site" evidence="1">
    <location>
        <begin position="64"/>
        <end position="71"/>
    </location>
    <ligand>
        <name>ATP</name>
        <dbReference type="ChEBI" id="CHEBI:30616"/>
    </ligand>
</feature>
<proteinExistence type="inferred from homology"/>
<protein>
    <recommendedName>
        <fullName evidence="1">Protein RecA</fullName>
    </recommendedName>
    <alternativeName>
        <fullName evidence="1">Recombinase A</fullName>
    </alternativeName>
</protein>
<accession>Q14FQ1</accession>
<organism>
    <name type="scientific">Francisella tularensis subsp. tularensis (strain FSC 198)</name>
    <dbReference type="NCBI Taxonomy" id="393115"/>
    <lineage>
        <taxon>Bacteria</taxon>
        <taxon>Pseudomonadati</taxon>
        <taxon>Pseudomonadota</taxon>
        <taxon>Gammaproteobacteria</taxon>
        <taxon>Thiotrichales</taxon>
        <taxon>Francisellaceae</taxon>
        <taxon>Francisella</taxon>
    </lineage>
</organism>
<name>RECA_FRAT1</name>
<keyword id="KW-0067">ATP-binding</keyword>
<keyword id="KW-0963">Cytoplasm</keyword>
<keyword id="KW-0227">DNA damage</keyword>
<keyword id="KW-0233">DNA recombination</keyword>
<keyword id="KW-0234">DNA repair</keyword>
<keyword id="KW-0238">DNA-binding</keyword>
<keyword id="KW-0547">Nucleotide-binding</keyword>
<keyword id="KW-0742">SOS response</keyword>